<reference key="1">
    <citation type="journal article" date="1997" name="Infect. Immun.">
        <title>Identification of tandem genes involved in lipooligosaccharide expression by Haemophilus ducreyi.</title>
        <authorList>
            <person name="Stevens M.K."/>
            <person name="Klesney-Tait J."/>
            <person name="Lumbley S."/>
            <person name="Walters K.A."/>
            <person name="Joffe A.M."/>
            <person name="Radolf J.D."/>
            <person name="Hansen E.J."/>
        </authorList>
    </citation>
    <scope>NUCLEOTIDE SEQUENCE [GENOMIC DNA]</scope>
    <source>
        <strain>35000HP / ATCC 700724</strain>
    </source>
</reference>
<reference key="2">
    <citation type="submission" date="1997-06" db="EMBL/GenBank/DDBJ databases">
        <authorList>
            <person name="Gibson B.W."/>
            <person name="Campagnari A.A."/>
            <person name="Melaugh W."/>
            <person name="Phillips N.J."/>
            <person name="Apicella M.A."/>
            <person name="Grass S."/>
            <person name="Wang J."/>
            <person name="Palmer K.L."/>
            <person name="Munson R.S. Jr."/>
        </authorList>
    </citation>
    <scope>NUCLEOTIDE SEQUENCE [GENOMIC DNA]</scope>
    <source>
        <strain>35000HP / ATCC 700724</strain>
    </source>
</reference>
<reference key="3">
    <citation type="submission" date="2003-06" db="EMBL/GenBank/DDBJ databases">
        <title>The complete genome sequence of Haemophilus ducreyi.</title>
        <authorList>
            <person name="Munson R.S. Jr."/>
            <person name="Ray W.C."/>
            <person name="Mahairas G."/>
            <person name="Sabo P."/>
            <person name="Mungur R."/>
            <person name="Johnson L."/>
            <person name="Nguyen D."/>
            <person name="Wang J."/>
            <person name="Forst C."/>
            <person name="Hood L."/>
        </authorList>
    </citation>
    <scope>NUCLEOTIDE SEQUENCE [LARGE SCALE GENOMIC DNA]</scope>
    <source>
        <strain>35000HP / ATCC 700724</strain>
    </source>
</reference>
<dbReference type="EMBL" id="U58147">
    <property type="protein sequence ID" value="AAB49622.1"/>
    <property type="molecule type" value="Genomic_DNA"/>
</dbReference>
<dbReference type="EMBL" id="AF004712">
    <property type="protein sequence ID" value="AAC45591.1"/>
    <property type="molecule type" value="Genomic_DNA"/>
</dbReference>
<dbReference type="EMBL" id="AE017143">
    <property type="protein sequence ID" value="AAP96481.1"/>
    <property type="molecule type" value="Genomic_DNA"/>
</dbReference>
<dbReference type="RefSeq" id="WP_010945510.1">
    <property type="nucleotide sequence ID" value="NC_002940.2"/>
</dbReference>
<dbReference type="SMR" id="Q59450"/>
<dbReference type="STRING" id="233412.HD_1722"/>
<dbReference type="KEGG" id="hdu:HD_1722"/>
<dbReference type="eggNOG" id="COG0254">
    <property type="taxonomic scope" value="Bacteria"/>
</dbReference>
<dbReference type="HOGENOM" id="CLU_114306_4_3_6"/>
<dbReference type="OrthoDB" id="9803251at2"/>
<dbReference type="Proteomes" id="UP000001022">
    <property type="component" value="Chromosome"/>
</dbReference>
<dbReference type="GO" id="GO:1990904">
    <property type="term" value="C:ribonucleoprotein complex"/>
    <property type="evidence" value="ECO:0007669"/>
    <property type="project" value="UniProtKB-KW"/>
</dbReference>
<dbReference type="GO" id="GO:0005840">
    <property type="term" value="C:ribosome"/>
    <property type="evidence" value="ECO:0007669"/>
    <property type="project" value="UniProtKB-KW"/>
</dbReference>
<dbReference type="GO" id="GO:0046872">
    <property type="term" value="F:metal ion binding"/>
    <property type="evidence" value="ECO:0007669"/>
    <property type="project" value="UniProtKB-KW"/>
</dbReference>
<dbReference type="GO" id="GO:0019843">
    <property type="term" value="F:rRNA binding"/>
    <property type="evidence" value="ECO:0007669"/>
    <property type="project" value="UniProtKB-KW"/>
</dbReference>
<dbReference type="GO" id="GO:0003735">
    <property type="term" value="F:structural constituent of ribosome"/>
    <property type="evidence" value="ECO:0007669"/>
    <property type="project" value="InterPro"/>
</dbReference>
<dbReference type="GO" id="GO:0006412">
    <property type="term" value="P:translation"/>
    <property type="evidence" value="ECO:0007669"/>
    <property type="project" value="UniProtKB-UniRule"/>
</dbReference>
<dbReference type="FunFam" id="4.10.830.30:FF:000001">
    <property type="entry name" value="50S ribosomal protein L31"/>
    <property type="match status" value="1"/>
</dbReference>
<dbReference type="Gene3D" id="4.10.830.30">
    <property type="entry name" value="Ribosomal protein L31"/>
    <property type="match status" value="1"/>
</dbReference>
<dbReference type="HAMAP" id="MF_00501">
    <property type="entry name" value="Ribosomal_bL31_1"/>
    <property type="match status" value="1"/>
</dbReference>
<dbReference type="InterPro" id="IPR034704">
    <property type="entry name" value="Ribosomal_bL28/bL31-like_sf"/>
</dbReference>
<dbReference type="InterPro" id="IPR002150">
    <property type="entry name" value="Ribosomal_bL31"/>
</dbReference>
<dbReference type="InterPro" id="IPR027491">
    <property type="entry name" value="Ribosomal_bL31_A"/>
</dbReference>
<dbReference type="InterPro" id="IPR042105">
    <property type="entry name" value="Ribosomal_bL31_sf"/>
</dbReference>
<dbReference type="NCBIfam" id="TIGR00105">
    <property type="entry name" value="L31"/>
    <property type="match status" value="1"/>
</dbReference>
<dbReference type="NCBIfam" id="NF000612">
    <property type="entry name" value="PRK00019.1"/>
    <property type="match status" value="1"/>
</dbReference>
<dbReference type="NCBIfam" id="NF001809">
    <property type="entry name" value="PRK00528.1"/>
    <property type="match status" value="1"/>
</dbReference>
<dbReference type="PANTHER" id="PTHR33280">
    <property type="entry name" value="50S RIBOSOMAL PROTEIN L31, CHLOROPLASTIC"/>
    <property type="match status" value="1"/>
</dbReference>
<dbReference type="PANTHER" id="PTHR33280:SF6">
    <property type="entry name" value="LARGE RIBOSOMAL SUBUNIT PROTEIN BL31A"/>
    <property type="match status" value="1"/>
</dbReference>
<dbReference type="Pfam" id="PF01197">
    <property type="entry name" value="Ribosomal_L31"/>
    <property type="match status" value="1"/>
</dbReference>
<dbReference type="PRINTS" id="PR01249">
    <property type="entry name" value="RIBOSOMALL31"/>
</dbReference>
<dbReference type="SUPFAM" id="SSF143800">
    <property type="entry name" value="L28p-like"/>
    <property type="match status" value="1"/>
</dbReference>
<dbReference type="PROSITE" id="PS01143">
    <property type="entry name" value="RIBOSOMAL_L31"/>
    <property type="match status" value="1"/>
</dbReference>
<feature type="chain" id="PRO_0000173112" description="Large ribosomal subunit protein bL31">
    <location>
        <begin position="1"/>
        <end position="70"/>
    </location>
</feature>
<feature type="binding site" evidence="1">
    <location>
        <position position="16"/>
    </location>
    <ligand>
        <name>Zn(2+)</name>
        <dbReference type="ChEBI" id="CHEBI:29105"/>
    </ligand>
</feature>
<feature type="binding site" evidence="1">
    <location>
        <position position="18"/>
    </location>
    <ligand>
        <name>Zn(2+)</name>
        <dbReference type="ChEBI" id="CHEBI:29105"/>
    </ligand>
</feature>
<feature type="binding site" evidence="1">
    <location>
        <position position="37"/>
    </location>
    <ligand>
        <name>Zn(2+)</name>
        <dbReference type="ChEBI" id="CHEBI:29105"/>
    </ligand>
</feature>
<feature type="binding site" evidence="1">
    <location>
        <position position="40"/>
    </location>
    <ligand>
        <name>Zn(2+)</name>
        <dbReference type="ChEBI" id="CHEBI:29105"/>
    </ligand>
</feature>
<evidence type="ECO:0000255" key="1">
    <source>
        <dbReference type="HAMAP-Rule" id="MF_00501"/>
    </source>
</evidence>
<evidence type="ECO:0000305" key="2"/>
<organism>
    <name type="scientific">Haemophilus ducreyi (strain 35000HP / ATCC 700724)</name>
    <dbReference type="NCBI Taxonomy" id="233412"/>
    <lineage>
        <taxon>Bacteria</taxon>
        <taxon>Pseudomonadati</taxon>
        <taxon>Pseudomonadota</taxon>
        <taxon>Gammaproteobacteria</taxon>
        <taxon>Pasteurellales</taxon>
        <taxon>Pasteurellaceae</taxon>
        <taxon>Haemophilus</taxon>
    </lineage>
</organism>
<protein>
    <recommendedName>
        <fullName evidence="1">Large ribosomal subunit protein bL31</fullName>
    </recommendedName>
    <alternativeName>
        <fullName evidence="2">50S ribosomal protein L31</fullName>
    </alternativeName>
</protein>
<comment type="function">
    <text evidence="1">Binds the 23S rRNA.</text>
</comment>
<comment type="cofactor">
    <cofactor evidence="1">
        <name>Zn(2+)</name>
        <dbReference type="ChEBI" id="CHEBI:29105"/>
    </cofactor>
    <text evidence="1">Binds 1 zinc ion per subunit.</text>
</comment>
<comment type="subunit">
    <text evidence="1">Part of the 50S ribosomal subunit.</text>
</comment>
<comment type="similarity">
    <text evidence="1">Belongs to the bacterial ribosomal protein bL31 family. Type A subfamily.</text>
</comment>
<accession>Q59450</accession>
<proteinExistence type="inferred from homology"/>
<gene>
    <name evidence="1" type="primary">rpmE</name>
    <name type="synonym">rpmE1</name>
    <name type="ordered locus">HD_1722</name>
</gene>
<keyword id="KW-0479">Metal-binding</keyword>
<keyword id="KW-1185">Reference proteome</keyword>
<keyword id="KW-0687">Ribonucleoprotein</keyword>
<keyword id="KW-0689">Ribosomal protein</keyword>
<keyword id="KW-0694">RNA-binding</keyword>
<keyword id="KW-0699">rRNA-binding</keyword>
<keyword id="KW-0862">Zinc</keyword>
<name>RL31_HAEDU</name>
<sequence length="70" mass="7917">MKQGIHPEYKEITATCSCGNVIKTRSTVEKNLNLDVCGNCHPFYTGKQRVVDTGGRVERFNKRFNIPSTK</sequence>